<accession>Q5LX06</accession>
<comment type="function">
    <text evidence="1">Catalyzes the isomerization between 2-isopropylmalate and 3-isopropylmalate, via the formation of 2-isopropylmaleate.</text>
</comment>
<comment type="catalytic activity">
    <reaction evidence="1">
        <text>(2R,3S)-3-isopropylmalate = (2S)-2-isopropylmalate</text>
        <dbReference type="Rhea" id="RHEA:32287"/>
        <dbReference type="ChEBI" id="CHEBI:1178"/>
        <dbReference type="ChEBI" id="CHEBI:35121"/>
        <dbReference type="EC" id="4.2.1.33"/>
    </reaction>
</comment>
<comment type="cofactor">
    <cofactor evidence="1">
        <name>[4Fe-4S] cluster</name>
        <dbReference type="ChEBI" id="CHEBI:49883"/>
    </cofactor>
    <text evidence="1">Binds 1 [4Fe-4S] cluster per subunit.</text>
</comment>
<comment type="pathway">
    <text evidence="1">Amino-acid biosynthesis; L-leucine biosynthesis; L-leucine from 3-methyl-2-oxobutanoate: step 2/4.</text>
</comment>
<comment type="subunit">
    <text evidence="1">Heterodimer of LeuC and LeuD.</text>
</comment>
<comment type="similarity">
    <text evidence="1">Belongs to the aconitase/IPM isomerase family. LeuC type 1 subfamily.</text>
</comment>
<keyword id="KW-0004">4Fe-4S</keyword>
<keyword id="KW-0028">Amino-acid biosynthesis</keyword>
<keyword id="KW-0100">Branched-chain amino acid biosynthesis</keyword>
<keyword id="KW-0408">Iron</keyword>
<keyword id="KW-0411">Iron-sulfur</keyword>
<keyword id="KW-0432">Leucine biosynthesis</keyword>
<keyword id="KW-0456">Lyase</keyword>
<keyword id="KW-0479">Metal-binding</keyword>
<keyword id="KW-1185">Reference proteome</keyword>
<feature type="chain" id="PRO_0000076810" description="3-isopropylmalate dehydratase large subunit">
    <location>
        <begin position="1"/>
        <end position="468"/>
    </location>
</feature>
<feature type="binding site" evidence="1">
    <location>
        <position position="349"/>
    </location>
    <ligand>
        <name>[4Fe-4S] cluster</name>
        <dbReference type="ChEBI" id="CHEBI:49883"/>
    </ligand>
</feature>
<feature type="binding site" evidence="1">
    <location>
        <position position="409"/>
    </location>
    <ligand>
        <name>[4Fe-4S] cluster</name>
        <dbReference type="ChEBI" id="CHEBI:49883"/>
    </ligand>
</feature>
<feature type="binding site" evidence="1">
    <location>
        <position position="412"/>
    </location>
    <ligand>
        <name>[4Fe-4S] cluster</name>
        <dbReference type="ChEBI" id="CHEBI:49883"/>
    </ligand>
</feature>
<dbReference type="EC" id="4.2.1.33" evidence="1"/>
<dbReference type="EMBL" id="CP000031">
    <property type="protein sequence ID" value="AAV93541.1"/>
    <property type="molecule type" value="Genomic_DNA"/>
</dbReference>
<dbReference type="RefSeq" id="WP_011045984.1">
    <property type="nucleotide sequence ID" value="NC_003911.12"/>
</dbReference>
<dbReference type="SMR" id="Q5LX06"/>
<dbReference type="STRING" id="246200.SPO0216"/>
<dbReference type="PaxDb" id="246200-SPO0216"/>
<dbReference type="DNASU" id="3195137"/>
<dbReference type="KEGG" id="sil:SPO0216"/>
<dbReference type="eggNOG" id="COG0065">
    <property type="taxonomic scope" value="Bacteria"/>
</dbReference>
<dbReference type="HOGENOM" id="CLU_006714_3_4_5"/>
<dbReference type="OrthoDB" id="9802769at2"/>
<dbReference type="UniPathway" id="UPA00048">
    <property type="reaction ID" value="UER00071"/>
</dbReference>
<dbReference type="Proteomes" id="UP000001023">
    <property type="component" value="Chromosome"/>
</dbReference>
<dbReference type="GO" id="GO:0003861">
    <property type="term" value="F:3-isopropylmalate dehydratase activity"/>
    <property type="evidence" value="ECO:0007669"/>
    <property type="project" value="UniProtKB-UniRule"/>
</dbReference>
<dbReference type="GO" id="GO:0051539">
    <property type="term" value="F:4 iron, 4 sulfur cluster binding"/>
    <property type="evidence" value="ECO:0007669"/>
    <property type="project" value="UniProtKB-KW"/>
</dbReference>
<dbReference type="GO" id="GO:0046872">
    <property type="term" value="F:metal ion binding"/>
    <property type="evidence" value="ECO:0007669"/>
    <property type="project" value="UniProtKB-KW"/>
</dbReference>
<dbReference type="GO" id="GO:0009098">
    <property type="term" value="P:L-leucine biosynthetic process"/>
    <property type="evidence" value="ECO:0007669"/>
    <property type="project" value="UniProtKB-UniRule"/>
</dbReference>
<dbReference type="CDD" id="cd01583">
    <property type="entry name" value="IPMI"/>
    <property type="match status" value="1"/>
</dbReference>
<dbReference type="FunFam" id="3.30.499.10:FF:000006">
    <property type="entry name" value="3-isopropylmalate dehydratase large subunit"/>
    <property type="match status" value="1"/>
</dbReference>
<dbReference type="FunFam" id="3.30.499.10:FF:000007">
    <property type="entry name" value="3-isopropylmalate dehydratase large subunit"/>
    <property type="match status" value="1"/>
</dbReference>
<dbReference type="Gene3D" id="3.30.499.10">
    <property type="entry name" value="Aconitase, domain 3"/>
    <property type="match status" value="2"/>
</dbReference>
<dbReference type="HAMAP" id="MF_01026">
    <property type="entry name" value="LeuC_type1"/>
    <property type="match status" value="1"/>
</dbReference>
<dbReference type="InterPro" id="IPR004430">
    <property type="entry name" value="3-IsopropMal_deHydase_lsu"/>
</dbReference>
<dbReference type="InterPro" id="IPR015931">
    <property type="entry name" value="Acnase/IPM_dHydase_lsu_aba_1/3"/>
</dbReference>
<dbReference type="InterPro" id="IPR001030">
    <property type="entry name" value="Acoase/IPM_deHydtase_lsu_aba"/>
</dbReference>
<dbReference type="InterPro" id="IPR018136">
    <property type="entry name" value="Aconitase_4Fe-4S_BS"/>
</dbReference>
<dbReference type="InterPro" id="IPR036008">
    <property type="entry name" value="Aconitase_4Fe-4S_dom"/>
</dbReference>
<dbReference type="InterPro" id="IPR050067">
    <property type="entry name" value="IPM_dehydratase_rel_enz"/>
</dbReference>
<dbReference type="InterPro" id="IPR033941">
    <property type="entry name" value="IPMI_cat"/>
</dbReference>
<dbReference type="NCBIfam" id="TIGR00170">
    <property type="entry name" value="leuC"/>
    <property type="match status" value="1"/>
</dbReference>
<dbReference type="NCBIfam" id="NF004016">
    <property type="entry name" value="PRK05478.1"/>
    <property type="match status" value="1"/>
</dbReference>
<dbReference type="NCBIfam" id="NF009116">
    <property type="entry name" value="PRK12466.1"/>
    <property type="match status" value="1"/>
</dbReference>
<dbReference type="PANTHER" id="PTHR43822:SF9">
    <property type="entry name" value="3-ISOPROPYLMALATE DEHYDRATASE"/>
    <property type="match status" value="1"/>
</dbReference>
<dbReference type="PANTHER" id="PTHR43822">
    <property type="entry name" value="HOMOACONITASE, MITOCHONDRIAL-RELATED"/>
    <property type="match status" value="1"/>
</dbReference>
<dbReference type="Pfam" id="PF00330">
    <property type="entry name" value="Aconitase"/>
    <property type="match status" value="1"/>
</dbReference>
<dbReference type="PRINTS" id="PR00415">
    <property type="entry name" value="ACONITASE"/>
</dbReference>
<dbReference type="SUPFAM" id="SSF53732">
    <property type="entry name" value="Aconitase iron-sulfur domain"/>
    <property type="match status" value="1"/>
</dbReference>
<dbReference type="PROSITE" id="PS00450">
    <property type="entry name" value="ACONITASE_1"/>
    <property type="match status" value="1"/>
</dbReference>
<dbReference type="PROSITE" id="PS01244">
    <property type="entry name" value="ACONITASE_2"/>
    <property type="match status" value="1"/>
</dbReference>
<reference key="1">
    <citation type="journal article" date="2004" name="Nature">
        <title>Genome sequence of Silicibacter pomeroyi reveals adaptations to the marine environment.</title>
        <authorList>
            <person name="Moran M.A."/>
            <person name="Buchan A."/>
            <person name="Gonzalez J.M."/>
            <person name="Heidelberg J.F."/>
            <person name="Whitman W.B."/>
            <person name="Kiene R.P."/>
            <person name="Henriksen J.R."/>
            <person name="King G.M."/>
            <person name="Belas R."/>
            <person name="Fuqua C."/>
            <person name="Brinkac L.M."/>
            <person name="Lewis M."/>
            <person name="Johri S."/>
            <person name="Weaver B."/>
            <person name="Pai G."/>
            <person name="Eisen J.A."/>
            <person name="Rahe E."/>
            <person name="Sheldon W.M."/>
            <person name="Ye W."/>
            <person name="Miller T.R."/>
            <person name="Carlton J."/>
            <person name="Rasko D.A."/>
            <person name="Paulsen I.T."/>
            <person name="Ren Q."/>
            <person name="Daugherty S.C."/>
            <person name="DeBoy R.T."/>
            <person name="Dodson R.J."/>
            <person name="Durkin A.S."/>
            <person name="Madupu R."/>
            <person name="Nelson W.C."/>
            <person name="Sullivan S.A."/>
            <person name="Rosovitz M.J."/>
            <person name="Haft D.H."/>
            <person name="Selengut J."/>
            <person name="Ward N."/>
        </authorList>
    </citation>
    <scope>NUCLEOTIDE SEQUENCE [LARGE SCALE GENOMIC DNA]</scope>
    <source>
        <strain>ATCC 700808 / DSM 15171 / DSS-3</strain>
    </source>
</reference>
<reference key="2">
    <citation type="journal article" date="2014" name="Stand. Genomic Sci.">
        <title>An updated genome annotation for the model marine bacterium Ruegeria pomeroyi DSS-3.</title>
        <authorList>
            <person name="Rivers A.R."/>
            <person name="Smith C.B."/>
            <person name="Moran M.A."/>
        </authorList>
    </citation>
    <scope>GENOME REANNOTATION</scope>
    <source>
        <strain>ATCC 700808 / DSM 15171 / DSS-3</strain>
    </source>
</reference>
<proteinExistence type="inferred from homology"/>
<sequence length="468" mass="50362">MSPKTLYDKIWDAHLAHEAEDGTCLLYIDRHLVHEVTSPQAFEGLRMAGRKVRAPEKTIAVPDHNVPTTEGREDPAQMTEESRIQVQALDKNAREFGVHYYPVDDIRQGIVHIVGPEQGWTLPGMTVVCGDSHTATHGAFGALAHGIGTSEVEHVLATQTLIQKKSKNMKVEITGKLNPGVTAKDITLAVIGATGTAGGTGYVIEYCGEAIRDLSMEGRMTVCNMAIEGGARAGLIAPDQTTFDYVKGRPHAPKGAQWEAALAWWKTLYSDDGAHFDKIVTLKGEEIEPVVTWGTSPEDVLPITGVVPSPEDFTGGKVEAARRSIEYMGLTPGQKLTDIEIDTVFIGSCTNGRIEDLRAVAEVVKGKKIKSGLRAMVVPGSGLVRAQAEEEGIADILKDAGFEWRLAGCSMCLAMNPDQLAPGERCAATSNRNFEGRQGYKGRTHLVSPAMAAAAALTGKLTDVRELI</sequence>
<gene>
    <name evidence="1" type="primary">leuC</name>
    <name type="ordered locus">SPO0216</name>
</gene>
<evidence type="ECO:0000255" key="1">
    <source>
        <dbReference type="HAMAP-Rule" id="MF_01026"/>
    </source>
</evidence>
<name>LEUC_RUEPO</name>
<organism>
    <name type="scientific">Ruegeria pomeroyi (strain ATCC 700808 / DSM 15171 / DSS-3)</name>
    <name type="common">Silicibacter pomeroyi</name>
    <dbReference type="NCBI Taxonomy" id="246200"/>
    <lineage>
        <taxon>Bacteria</taxon>
        <taxon>Pseudomonadati</taxon>
        <taxon>Pseudomonadota</taxon>
        <taxon>Alphaproteobacteria</taxon>
        <taxon>Rhodobacterales</taxon>
        <taxon>Roseobacteraceae</taxon>
        <taxon>Ruegeria</taxon>
    </lineage>
</organism>
<protein>
    <recommendedName>
        <fullName evidence="1">3-isopropylmalate dehydratase large subunit</fullName>
        <ecNumber evidence="1">4.2.1.33</ecNumber>
    </recommendedName>
    <alternativeName>
        <fullName evidence="1">Alpha-IPM isomerase</fullName>
        <shortName evidence="1">IPMI</shortName>
    </alternativeName>
    <alternativeName>
        <fullName evidence="1">Isopropylmalate isomerase</fullName>
    </alternativeName>
</protein>